<gene>
    <name evidence="1" type="primary">smg</name>
    <name type="ordered locus">Smal_3588</name>
</gene>
<organism>
    <name type="scientific">Stenotrophomonas maltophilia (strain R551-3)</name>
    <dbReference type="NCBI Taxonomy" id="391008"/>
    <lineage>
        <taxon>Bacteria</taxon>
        <taxon>Pseudomonadati</taxon>
        <taxon>Pseudomonadota</taxon>
        <taxon>Gammaproteobacteria</taxon>
        <taxon>Lysobacterales</taxon>
        <taxon>Lysobacteraceae</taxon>
        <taxon>Stenotrophomonas</taxon>
        <taxon>Stenotrophomonas maltophilia group</taxon>
    </lineage>
</organism>
<feature type="chain" id="PRO_1000129908" description="Protein Smg homolog">
    <location>
        <begin position="1"/>
        <end position="157"/>
    </location>
</feature>
<reference key="1">
    <citation type="submission" date="2008-06" db="EMBL/GenBank/DDBJ databases">
        <title>Complete sequence of Stenotrophomonas maltophilia R551-3.</title>
        <authorList>
            <consortium name="US DOE Joint Genome Institute"/>
            <person name="Lucas S."/>
            <person name="Copeland A."/>
            <person name="Lapidus A."/>
            <person name="Glavina del Rio T."/>
            <person name="Dalin E."/>
            <person name="Tice H."/>
            <person name="Pitluck S."/>
            <person name="Chain P."/>
            <person name="Malfatti S."/>
            <person name="Shin M."/>
            <person name="Vergez L."/>
            <person name="Lang D."/>
            <person name="Schmutz J."/>
            <person name="Larimer F."/>
            <person name="Land M."/>
            <person name="Hauser L."/>
            <person name="Kyrpides N."/>
            <person name="Mikhailova N."/>
            <person name="Taghavi S."/>
            <person name="Monchy S."/>
            <person name="Newman L."/>
            <person name="Vangronsveld J."/>
            <person name="van der Lelie D."/>
            <person name="Richardson P."/>
        </authorList>
    </citation>
    <scope>NUCLEOTIDE SEQUENCE [LARGE SCALE GENOMIC DNA]</scope>
    <source>
        <strain>R551-3</strain>
    </source>
</reference>
<protein>
    <recommendedName>
        <fullName evidence="1">Protein Smg homolog</fullName>
    </recommendedName>
</protein>
<proteinExistence type="inferred from homology"/>
<evidence type="ECO:0000255" key="1">
    <source>
        <dbReference type="HAMAP-Rule" id="MF_00598"/>
    </source>
</evidence>
<accession>B4SKI0</accession>
<comment type="similarity">
    <text evidence="1">Belongs to the Smg family.</text>
</comment>
<name>SMG_STRM5</name>
<dbReference type="EMBL" id="CP001111">
    <property type="protein sequence ID" value="ACF53287.1"/>
    <property type="molecule type" value="Genomic_DNA"/>
</dbReference>
<dbReference type="RefSeq" id="WP_005411195.1">
    <property type="nucleotide sequence ID" value="NC_011071.1"/>
</dbReference>
<dbReference type="SMR" id="B4SKI0"/>
<dbReference type="STRING" id="391008.Smal_3588"/>
<dbReference type="KEGG" id="smt:Smal_3588"/>
<dbReference type="eggNOG" id="COG2922">
    <property type="taxonomic scope" value="Bacteria"/>
</dbReference>
<dbReference type="HOGENOM" id="CLU_133242_0_0_6"/>
<dbReference type="OrthoDB" id="9788984at2"/>
<dbReference type="Proteomes" id="UP000001867">
    <property type="component" value="Chromosome"/>
</dbReference>
<dbReference type="HAMAP" id="MF_00598">
    <property type="entry name" value="Smg"/>
    <property type="match status" value="1"/>
</dbReference>
<dbReference type="InterPro" id="IPR007456">
    <property type="entry name" value="Smg"/>
</dbReference>
<dbReference type="NCBIfam" id="NF002897">
    <property type="entry name" value="PRK03430.1"/>
    <property type="match status" value="1"/>
</dbReference>
<dbReference type="PANTHER" id="PTHR38692">
    <property type="entry name" value="PROTEIN SMG"/>
    <property type="match status" value="1"/>
</dbReference>
<dbReference type="PANTHER" id="PTHR38692:SF1">
    <property type="entry name" value="PROTEIN SMG"/>
    <property type="match status" value="1"/>
</dbReference>
<dbReference type="Pfam" id="PF04361">
    <property type="entry name" value="DUF494"/>
    <property type="match status" value="1"/>
</dbReference>
<sequence length="157" mass="18056">MKESILDVLLYLFEHYFSEDADLIRDRDSLQNGLIQAGFSPTEINKAFDWLDALAAQRPSVAQARVDGPVRVYHGPELDKLDVECRGFLLYLEQHGILDADQRELVLDRAMALDQDELDLDDLKWVVLMVLFNQPGSEAAYAWMETQMFMDEPEPLH</sequence>